<accession>P61146</accession>
<protein>
    <recommendedName>
        <fullName>Alpha-synuclein</fullName>
    </recommendedName>
</protein>
<comment type="function">
    <text evidence="4">Neuronal protein that plays several roles in synaptic activity such as regulation of synaptic vesicle trafficking and subsequent neurotransmitter release (By similarity). Participates as a monomer in synaptic vesicle exocytosis by enhancing vesicle priming, fusion and dilation of exocytotic fusion pores (By similarity). Mechanistically, acts by increasing local Ca(2+) release from microdomains which is essential for the enhancement of ATP-induced exocytosis (By similarity). Also acts as a molecular chaperone in its multimeric membrane-bound state, assisting in the folding of synaptic fusion components called SNAREs (Soluble NSF Attachment Protein REceptors) at presynaptic plasma membrane in conjunction with cysteine string protein-alpha/DNAJC5 (By similarity). This chaperone activity is important to sustain normal SNARE-complex assembly during aging (By similarity). Also plays a role in the regulation of the dopamine neurotransmission by associating with the dopamine transporter (DAT1) and thereby modulating its activity (By similarity).</text>
</comment>
<comment type="subunit">
    <text evidence="2 4">Soluble monomer. Homotetramer. A dynamic intracellular population of tetramers and monomers coexists normally and the tetramer plays an essential role in maintaining homeostasis (By similarity). Interacts with UCHL1 (By similarity). Interacts with phospholipase D and histones. Interacts (via N-terminus) with synphilin-1/SNCAIP; this interaction promotes formation of SNCA inclusions in the cytoplasm. Interacts with CALM1. Interacts with STXBP1; this interaction controls SNCA self-replicating aggregation. Interacts with SNARE components VAMP2 and SNAP25; these interactions allows SNARE complex assembly and integrity (By similarity). Interacts with RPH3A and RAB3A (By similarity). Interacts with SERF1A; this interaction promotes the aggregation of SNCA (By similarity). Interacts with SEPTIN4 (By similarity). Interacts with DDX10; this interaction causes DDX10 mislocalization to the nucleoplasm and cytoplasmic inclusions (By similarity).</text>
</comment>
<comment type="subcellular location">
    <subcellularLocation>
        <location evidence="4">Cytoplasm</location>
        <location evidence="4">Cytosol</location>
    </subcellularLocation>
    <subcellularLocation>
        <location evidence="4">Membrane</location>
    </subcellularLocation>
    <subcellularLocation>
        <location evidence="4">Nucleus</location>
    </subcellularLocation>
    <subcellularLocation>
        <location evidence="4">Synapse</location>
    </subcellularLocation>
    <subcellularLocation>
        <location evidence="4">Secreted</location>
    </subcellularLocation>
    <subcellularLocation>
        <location evidence="2">Cell projection</location>
        <location evidence="2">Axon</location>
    </subcellularLocation>
    <text evidence="2 4">Membrane-bound in dopaminergic neurons (By similarity). Expressed and colocalized with SEPTIN4 in dopaminergic axon terminals, especially at the varicosities (By similarity).</text>
</comment>
<comment type="PTM">
    <text evidence="4">Phosphorylated, predominantly on serine residues. Phosphorylated on Tyr-125 upon osmotic stress.</text>
</comment>
<comment type="PTM">
    <text evidence="3">Ubiquitinated. The predominant conjugate is the diubiquitinated form.</text>
</comment>
<comment type="PTM">
    <text evidence="4">Acetylation at Met-1 seems to be important for proper folding and native oligomeric structure.</text>
</comment>
<comment type="similarity">
    <text evidence="6">Belongs to the synuclein family.</text>
</comment>
<keyword id="KW-0007">Acetylation</keyword>
<keyword id="KW-0966">Cell projection</keyword>
<keyword id="KW-0186">Copper</keyword>
<keyword id="KW-0963">Cytoplasm</keyword>
<keyword id="KW-0472">Membrane</keyword>
<keyword id="KW-0479">Metal-binding</keyword>
<keyword id="KW-0539">Nucleus</keyword>
<keyword id="KW-0597">Phosphoprotein</keyword>
<keyword id="KW-1185">Reference proteome</keyword>
<keyword id="KW-0677">Repeat</keyword>
<keyword id="KW-0964">Secreted</keyword>
<keyword id="KW-0770">Synapse</keyword>
<keyword id="KW-0832">Ubl conjugation</keyword>
<dbReference type="EMBL" id="AY362309">
    <property type="protein sequence ID" value="AAQ85070.1"/>
    <property type="molecule type" value="Genomic_DNA"/>
</dbReference>
<dbReference type="EMBL" id="AY362305">
    <property type="protein sequence ID" value="AAQ85070.1"/>
    <property type="status" value="JOINED"/>
    <property type="molecule type" value="Genomic_DNA"/>
</dbReference>
<dbReference type="EMBL" id="AY362306">
    <property type="protein sequence ID" value="AAQ85070.1"/>
    <property type="status" value="JOINED"/>
    <property type="molecule type" value="Genomic_DNA"/>
</dbReference>
<dbReference type="EMBL" id="AY362307">
    <property type="protein sequence ID" value="AAQ85070.1"/>
    <property type="status" value="JOINED"/>
    <property type="molecule type" value="Genomic_DNA"/>
</dbReference>
<dbReference type="EMBL" id="AY362308">
    <property type="protein sequence ID" value="AAQ85070.1"/>
    <property type="status" value="JOINED"/>
    <property type="molecule type" value="Genomic_DNA"/>
</dbReference>
<dbReference type="STRING" id="9601.ENSPPYP00000016673"/>
<dbReference type="eggNOG" id="ENOG502S0Q7">
    <property type="taxonomic scope" value="Eukaryota"/>
</dbReference>
<dbReference type="InParanoid" id="P61146"/>
<dbReference type="Proteomes" id="UP000001595">
    <property type="component" value="Unplaced"/>
</dbReference>
<dbReference type="GO" id="GO:0043679">
    <property type="term" value="C:axon terminus"/>
    <property type="evidence" value="ECO:0007669"/>
    <property type="project" value="TreeGrafter"/>
</dbReference>
<dbReference type="GO" id="GO:0005829">
    <property type="term" value="C:cytosol"/>
    <property type="evidence" value="ECO:0000250"/>
    <property type="project" value="UniProtKB"/>
</dbReference>
<dbReference type="GO" id="GO:0005615">
    <property type="term" value="C:extracellular space"/>
    <property type="evidence" value="ECO:0000250"/>
    <property type="project" value="UniProtKB"/>
</dbReference>
<dbReference type="GO" id="GO:0016020">
    <property type="term" value="C:membrane"/>
    <property type="evidence" value="ECO:0000250"/>
    <property type="project" value="UniProtKB"/>
</dbReference>
<dbReference type="GO" id="GO:0043025">
    <property type="term" value="C:neuronal cell body"/>
    <property type="evidence" value="ECO:0007669"/>
    <property type="project" value="TreeGrafter"/>
</dbReference>
<dbReference type="GO" id="GO:0005634">
    <property type="term" value="C:nucleus"/>
    <property type="evidence" value="ECO:0000250"/>
    <property type="project" value="UniProtKB"/>
</dbReference>
<dbReference type="GO" id="GO:0005507">
    <property type="term" value="F:copper ion binding"/>
    <property type="evidence" value="ECO:0000250"/>
    <property type="project" value="UniProtKB"/>
</dbReference>
<dbReference type="GO" id="GO:1903136">
    <property type="term" value="F:cuprous ion binding"/>
    <property type="evidence" value="ECO:0007669"/>
    <property type="project" value="TreeGrafter"/>
</dbReference>
<dbReference type="GO" id="GO:0042802">
    <property type="term" value="F:identical protein binding"/>
    <property type="evidence" value="ECO:0000250"/>
    <property type="project" value="UniProtKB"/>
</dbReference>
<dbReference type="GO" id="GO:0007268">
    <property type="term" value="P:chemical synaptic transmission"/>
    <property type="evidence" value="ECO:0007669"/>
    <property type="project" value="TreeGrafter"/>
</dbReference>
<dbReference type="GO" id="GO:0014059">
    <property type="term" value="P:regulation of dopamine secretion"/>
    <property type="evidence" value="ECO:0007669"/>
    <property type="project" value="InterPro"/>
</dbReference>
<dbReference type="GO" id="GO:0050808">
    <property type="term" value="P:synapse organization"/>
    <property type="evidence" value="ECO:0007669"/>
    <property type="project" value="TreeGrafter"/>
</dbReference>
<dbReference type="GO" id="GO:0048488">
    <property type="term" value="P:synaptic vesicle endocytosis"/>
    <property type="evidence" value="ECO:0007669"/>
    <property type="project" value="TreeGrafter"/>
</dbReference>
<dbReference type="FunFam" id="1.10.287.700:FF:000001">
    <property type="entry name" value="Alpha-synuclein"/>
    <property type="match status" value="1"/>
</dbReference>
<dbReference type="Gene3D" id="1.10.287.700">
    <property type="entry name" value="Helix hairpin bin"/>
    <property type="match status" value="1"/>
</dbReference>
<dbReference type="InterPro" id="IPR001058">
    <property type="entry name" value="Synuclein"/>
</dbReference>
<dbReference type="InterPro" id="IPR002460">
    <property type="entry name" value="Synuclein_alpha"/>
</dbReference>
<dbReference type="PANTHER" id="PTHR13820:SF5">
    <property type="entry name" value="ALPHA-SYNUCLEIN"/>
    <property type="match status" value="1"/>
</dbReference>
<dbReference type="PANTHER" id="PTHR13820">
    <property type="entry name" value="SYNUCLEIN"/>
    <property type="match status" value="1"/>
</dbReference>
<dbReference type="Pfam" id="PF01387">
    <property type="entry name" value="Synuclein"/>
    <property type="match status" value="1"/>
</dbReference>
<dbReference type="PRINTS" id="PR01212">
    <property type="entry name" value="ASYNUCLEIN"/>
</dbReference>
<dbReference type="PRINTS" id="PR01211">
    <property type="entry name" value="SYNUCLEIN"/>
</dbReference>
<dbReference type="SUPFAM" id="SSF118375">
    <property type="entry name" value="Synuclein"/>
    <property type="match status" value="1"/>
</dbReference>
<organism>
    <name type="scientific">Pongo abelii</name>
    <name type="common">Sumatran orangutan</name>
    <name type="synonym">Pongo pygmaeus abelii</name>
    <dbReference type="NCBI Taxonomy" id="9601"/>
    <lineage>
        <taxon>Eukaryota</taxon>
        <taxon>Metazoa</taxon>
        <taxon>Chordata</taxon>
        <taxon>Craniata</taxon>
        <taxon>Vertebrata</taxon>
        <taxon>Euteleostomi</taxon>
        <taxon>Mammalia</taxon>
        <taxon>Eutheria</taxon>
        <taxon>Euarchontoglires</taxon>
        <taxon>Primates</taxon>
        <taxon>Haplorrhini</taxon>
        <taxon>Catarrhini</taxon>
        <taxon>Hominidae</taxon>
        <taxon>Pongo</taxon>
    </lineage>
</organism>
<reference key="1">
    <citation type="journal article" date="2004" name="Genomics">
        <title>Alpha-synuclein A53T substitution associated with Parkinson disease also marks the divergence of Old World and New World primates.</title>
        <authorList>
            <person name="Hamilton B.A."/>
        </authorList>
    </citation>
    <scope>NUCLEOTIDE SEQUENCE [GENOMIC DNA]</scope>
</reference>
<name>SYUA_PONAB</name>
<sequence length="140" mass="14464">MDVFMKGLSKAKEGVVAAAEKTKQGVAEAAGKTKEGVLYVGSKTKEGVVHGVATVAEKTKEQVTNVGGAVVTGVTAVAQKTVEGAGSIAAATGFVKKDQLGKNEEGATQEGILEDMPVDPDNEAYEMPSEEGYQDYEPEA</sequence>
<feature type="chain" id="PRO_0000184030" description="Alpha-synuclein">
    <location>
        <begin position="1"/>
        <end position="140"/>
    </location>
</feature>
<feature type="region of interest" description="Disordered" evidence="5">
    <location>
        <begin position="100"/>
        <end position="140"/>
    </location>
</feature>
<feature type="region of interest" description="Interaction with SERF1A" evidence="4">
    <location>
        <begin position="111"/>
        <end position="140"/>
    </location>
</feature>
<feature type="compositionally biased region" description="Acidic residues" evidence="5">
    <location>
        <begin position="112"/>
        <end position="140"/>
    </location>
</feature>
<feature type="binding site" evidence="1">
    <location>
        <position position="2"/>
    </location>
    <ligand>
        <name>Cu cation</name>
        <dbReference type="ChEBI" id="CHEBI:23378"/>
    </ligand>
</feature>
<feature type="binding site" evidence="1">
    <location>
        <position position="50"/>
    </location>
    <ligand>
        <name>Cu cation</name>
        <dbReference type="ChEBI" id="CHEBI:23378"/>
    </ligand>
</feature>
<feature type="modified residue" description="N-acetylmethionine" evidence="4">
    <location>
        <position position="1"/>
    </location>
</feature>
<feature type="modified residue" description="Phosphoserine" evidence="4">
    <location>
        <position position="87"/>
    </location>
</feature>
<feature type="modified residue" description="Phosphotyrosine; by FYN" evidence="4">
    <location>
        <position position="125"/>
    </location>
</feature>
<feature type="modified residue" description="Phosphoserine; by PLK2" evidence="4">
    <location>
        <position position="129"/>
    </location>
</feature>
<evidence type="ECO:0000250" key="1"/>
<evidence type="ECO:0000250" key="2">
    <source>
        <dbReference type="UniProtKB" id="O55042"/>
    </source>
</evidence>
<evidence type="ECO:0000250" key="3">
    <source>
        <dbReference type="UniProtKB" id="P37377"/>
    </source>
</evidence>
<evidence type="ECO:0000250" key="4">
    <source>
        <dbReference type="UniProtKB" id="P37840"/>
    </source>
</evidence>
<evidence type="ECO:0000256" key="5">
    <source>
        <dbReference type="SAM" id="MobiDB-lite"/>
    </source>
</evidence>
<evidence type="ECO:0000305" key="6"/>
<proteinExistence type="inferred from homology"/>
<gene>
    <name type="primary">SNCA</name>
</gene>